<feature type="chain" id="PRO_0000172223" description="S-ribosylhomocysteine lyase">
    <location>
        <begin position="1"/>
        <end position="152"/>
    </location>
</feature>
<feature type="binding site" evidence="1">
    <location>
        <position position="53"/>
    </location>
    <ligand>
        <name>Fe cation</name>
        <dbReference type="ChEBI" id="CHEBI:24875"/>
    </ligand>
</feature>
<feature type="binding site" evidence="1">
    <location>
        <position position="57"/>
    </location>
    <ligand>
        <name>Fe cation</name>
        <dbReference type="ChEBI" id="CHEBI:24875"/>
    </ligand>
</feature>
<feature type="binding site" evidence="1">
    <location>
        <position position="120"/>
    </location>
    <ligand>
        <name>Fe cation</name>
        <dbReference type="ChEBI" id="CHEBI:24875"/>
    </ligand>
</feature>
<gene>
    <name evidence="1" type="primary">luxS</name>
    <name type="ordered locus">EF_1182</name>
</gene>
<evidence type="ECO:0000255" key="1">
    <source>
        <dbReference type="HAMAP-Rule" id="MF_00091"/>
    </source>
</evidence>
<proteinExistence type="inferred from homology"/>
<protein>
    <recommendedName>
        <fullName evidence="1">S-ribosylhomocysteine lyase</fullName>
        <ecNumber evidence="1">4.4.1.21</ecNumber>
    </recommendedName>
    <alternativeName>
        <fullName evidence="1">AI-2 synthesis protein</fullName>
    </alternativeName>
    <alternativeName>
        <fullName evidence="1">Autoinducer-2 production protein LuxS</fullName>
    </alternativeName>
</protein>
<sequence length="152" mass="17112">MARVESFELDHNTVKAPYVRLAGTEQNGDALVEKYDLRFLQPNKDALPTGALHTLEHLLAVNMRDELKGIIDISPMGCRTGFYMIMWDQHSPQEIRDALVNVLNKVINTEVVPAVSAKECGNYKDHSLFAAKEYAKIVLDQGISLDPFERIL</sequence>
<comment type="function">
    <text evidence="1">Involved in the synthesis of autoinducer 2 (AI-2) which is secreted by bacteria and is used to communicate both the cell density and the metabolic potential of the environment. The regulation of gene expression in response to changes in cell density is called quorum sensing. Catalyzes the transformation of S-ribosylhomocysteine (RHC) to homocysteine (HC) and 4,5-dihydroxy-2,3-pentadione (DPD).</text>
</comment>
<comment type="catalytic activity">
    <reaction evidence="1">
        <text>S-(5-deoxy-D-ribos-5-yl)-L-homocysteine = (S)-4,5-dihydroxypentane-2,3-dione + L-homocysteine</text>
        <dbReference type="Rhea" id="RHEA:17753"/>
        <dbReference type="ChEBI" id="CHEBI:29484"/>
        <dbReference type="ChEBI" id="CHEBI:58195"/>
        <dbReference type="ChEBI" id="CHEBI:58199"/>
        <dbReference type="EC" id="4.4.1.21"/>
    </reaction>
</comment>
<comment type="cofactor">
    <cofactor evidence="1">
        <name>Fe cation</name>
        <dbReference type="ChEBI" id="CHEBI:24875"/>
    </cofactor>
    <text evidence="1">Binds 1 Fe cation per subunit.</text>
</comment>
<comment type="subunit">
    <text evidence="1">Homodimer.</text>
</comment>
<comment type="similarity">
    <text evidence="1">Belongs to the LuxS family.</text>
</comment>
<keyword id="KW-0071">Autoinducer synthesis</keyword>
<keyword id="KW-0408">Iron</keyword>
<keyword id="KW-0456">Lyase</keyword>
<keyword id="KW-0479">Metal-binding</keyword>
<keyword id="KW-0673">Quorum sensing</keyword>
<keyword id="KW-1185">Reference proteome</keyword>
<reference key="1">
    <citation type="journal article" date="2003" name="Science">
        <title>Role of mobile DNA in the evolution of vancomycin-resistant Enterococcus faecalis.</title>
        <authorList>
            <person name="Paulsen I.T."/>
            <person name="Banerjei L."/>
            <person name="Myers G.S.A."/>
            <person name="Nelson K.E."/>
            <person name="Seshadri R."/>
            <person name="Read T.D."/>
            <person name="Fouts D.E."/>
            <person name="Eisen J.A."/>
            <person name="Gill S.R."/>
            <person name="Heidelberg J.F."/>
            <person name="Tettelin H."/>
            <person name="Dodson R.J."/>
            <person name="Umayam L.A."/>
            <person name="Brinkac L.M."/>
            <person name="Beanan M.J."/>
            <person name="Daugherty S.C."/>
            <person name="DeBoy R.T."/>
            <person name="Durkin S.A."/>
            <person name="Kolonay J.F."/>
            <person name="Madupu R."/>
            <person name="Nelson W.C."/>
            <person name="Vamathevan J.J."/>
            <person name="Tran B."/>
            <person name="Upton J."/>
            <person name="Hansen T."/>
            <person name="Shetty J."/>
            <person name="Khouri H.M."/>
            <person name="Utterback T.R."/>
            <person name="Radune D."/>
            <person name="Ketchum K.A."/>
            <person name="Dougherty B.A."/>
            <person name="Fraser C.M."/>
        </authorList>
    </citation>
    <scope>NUCLEOTIDE SEQUENCE [LARGE SCALE GENOMIC DNA]</scope>
    <source>
        <strain>ATCC 700802 / V583</strain>
    </source>
</reference>
<name>LUXS_ENTFA</name>
<organism>
    <name type="scientific">Enterococcus faecalis (strain ATCC 700802 / V583)</name>
    <dbReference type="NCBI Taxonomy" id="226185"/>
    <lineage>
        <taxon>Bacteria</taxon>
        <taxon>Bacillati</taxon>
        <taxon>Bacillota</taxon>
        <taxon>Bacilli</taxon>
        <taxon>Lactobacillales</taxon>
        <taxon>Enterococcaceae</taxon>
        <taxon>Enterococcus</taxon>
    </lineage>
</organism>
<accession>Q836D3</accession>
<dbReference type="EC" id="4.4.1.21" evidence="1"/>
<dbReference type="EMBL" id="AE016830">
    <property type="protein sequence ID" value="AAO80981.1"/>
    <property type="molecule type" value="Genomic_DNA"/>
</dbReference>
<dbReference type="RefSeq" id="NP_814911.1">
    <property type="nucleotide sequence ID" value="NC_004668.1"/>
</dbReference>
<dbReference type="RefSeq" id="WP_002357960.1">
    <property type="nucleotide sequence ID" value="NZ_KE136528.1"/>
</dbReference>
<dbReference type="SMR" id="Q836D3"/>
<dbReference type="STRING" id="226185.EF_1182"/>
<dbReference type="EnsemblBacteria" id="AAO80981">
    <property type="protein sequence ID" value="AAO80981"/>
    <property type="gene ID" value="EF_1182"/>
</dbReference>
<dbReference type="KEGG" id="efa:EF1182"/>
<dbReference type="PATRIC" id="fig|226185.45.peg.2316"/>
<dbReference type="eggNOG" id="COG1854">
    <property type="taxonomic scope" value="Bacteria"/>
</dbReference>
<dbReference type="HOGENOM" id="CLU_107531_2_0_9"/>
<dbReference type="PHI-base" id="PHI:4577"/>
<dbReference type="Proteomes" id="UP000001415">
    <property type="component" value="Chromosome"/>
</dbReference>
<dbReference type="GO" id="GO:0005506">
    <property type="term" value="F:iron ion binding"/>
    <property type="evidence" value="ECO:0007669"/>
    <property type="project" value="InterPro"/>
</dbReference>
<dbReference type="GO" id="GO:0043768">
    <property type="term" value="F:S-ribosylhomocysteine lyase activity"/>
    <property type="evidence" value="ECO:0007669"/>
    <property type="project" value="UniProtKB-UniRule"/>
</dbReference>
<dbReference type="GO" id="GO:0009372">
    <property type="term" value="P:quorum sensing"/>
    <property type="evidence" value="ECO:0007669"/>
    <property type="project" value="UniProtKB-UniRule"/>
</dbReference>
<dbReference type="Gene3D" id="3.30.1360.80">
    <property type="entry name" value="S-ribosylhomocysteinase (LuxS)"/>
    <property type="match status" value="1"/>
</dbReference>
<dbReference type="HAMAP" id="MF_00091">
    <property type="entry name" value="LuxS"/>
    <property type="match status" value="1"/>
</dbReference>
<dbReference type="InterPro" id="IPR037005">
    <property type="entry name" value="LuxS_sf"/>
</dbReference>
<dbReference type="InterPro" id="IPR011249">
    <property type="entry name" value="Metalloenz_LuxS/M16"/>
</dbReference>
<dbReference type="InterPro" id="IPR003815">
    <property type="entry name" value="S-ribosylhomocysteinase"/>
</dbReference>
<dbReference type="NCBIfam" id="NF002606">
    <property type="entry name" value="PRK02260.2-4"/>
    <property type="match status" value="1"/>
</dbReference>
<dbReference type="PANTHER" id="PTHR35799">
    <property type="entry name" value="S-RIBOSYLHOMOCYSTEINE LYASE"/>
    <property type="match status" value="1"/>
</dbReference>
<dbReference type="PANTHER" id="PTHR35799:SF1">
    <property type="entry name" value="S-RIBOSYLHOMOCYSTEINE LYASE"/>
    <property type="match status" value="1"/>
</dbReference>
<dbReference type="Pfam" id="PF02664">
    <property type="entry name" value="LuxS"/>
    <property type="match status" value="1"/>
</dbReference>
<dbReference type="PIRSF" id="PIRSF006160">
    <property type="entry name" value="AI2"/>
    <property type="match status" value="1"/>
</dbReference>
<dbReference type="PRINTS" id="PR01487">
    <property type="entry name" value="LUXSPROTEIN"/>
</dbReference>
<dbReference type="SUPFAM" id="SSF63411">
    <property type="entry name" value="LuxS/MPP-like metallohydrolase"/>
    <property type="match status" value="1"/>
</dbReference>